<reference key="1">
    <citation type="journal article" date="1987" name="Nature">
        <title>Transformation of cell adhesion properties by exogenously introduced E-cadherin cDNA.</title>
        <authorList>
            <person name="Nagafuchi A."/>
            <person name="Shirayoshi Y."/>
            <person name="Okazari K."/>
            <person name="Yasuda K."/>
            <person name="Takeichi M."/>
        </authorList>
    </citation>
    <scope>NUCLEOTIDE SEQUENCE [MRNA]</scope>
    <source>
        <strain>ICR</strain>
    </source>
</reference>
<reference key="2">
    <citation type="journal article" date="1991" name="Nucleic Acids Res.">
        <title>The structure of the gene coding for the mouse cell adhesion molecule uvomorulin.</title>
        <authorList>
            <person name="Ringwald M."/>
            <person name="Baribault H."/>
            <person name="Schmidt C."/>
            <person name="Kemler R."/>
        </authorList>
    </citation>
    <scope>NUCLEOTIDE SEQUENCE [GENOMIC DNA]</scope>
    <source>
        <strain>129/Sv</strain>
    </source>
</reference>
<reference key="3">
    <citation type="journal article" date="1987" name="EMBO J.">
        <title>The structure of cell adhesion molecule uvomorulin. Insights into the molecular mechanism of Ca2+-dependent cell adhesion.</title>
        <authorList>
            <person name="Ringwald M."/>
            <person name="Schuh R."/>
            <person name="Vestweber D."/>
            <person name="Eistetter H."/>
            <person name="Lottspeich F."/>
            <person name="Engel J."/>
            <person name="Doelz R."/>
            <person name="Jaehnig F."/>
            <person name="Epplen J."/>
            <person name="Mayer S."/>
            <person name="Mueller C."/>
            <person name="Kemler R."/>
        </authorList>
    </citation>
    <scope>NUCLEOTIDE SEQUENCE [MRNA] OF 174-884</scope>
    <scope>PROTEIN SEQUENCE OF 157-181</scope>
</reference>
<reference key="4">
    <citation type="journal article" date="1991" name="Proc. Natl. Acad. Sci. U.S.A.">
        <title>The E-cadherin promoter: functional analysis of a G.C-rich region and an epithelial cell-specific palindromic regulatory element.</title>
        <authorList>
            <person name="Behrens J."/>
            <person name="Loewrick O."/>
            <person name="Klein-Hitpass L."/>
            <person name="Birchmeier W."/>
        </authorList>
    </citation>
    <scope>NUCLEOTIDE SEQUENCE [GENOMIC DNA] OF 1-15</scope>
</reference>
<reference key="5">
    <citation type="journal article" date="1994" name="FEBS Lett.">
        <title>Distinct cadherin-catenin complexes in Ca(2+)-dependent cell-cell adhesion.</title>
        <authorList>
            <person name="Butz S."/>
            <person name="Kemler R."/>
        </authorList>
    </citation>
    <scope>IDENTIFICATION IN AN E-CADHERIN/CATENIN ADHESION COMPLEX</scope>
</reference>
<reference key="6">
    <citation type="journal article" date="1996" name="Biol. Reprod.">
        <title>A comprehensive survey of the cadherins expressed in the testes of fetal, immature, and adult mice utilizing the polymerase chain reaction.</title>
        <authorList>
            <person name="Munro S.B."/>
            <person name="Blaschuk O.W."/>
        </authorList>
    </citation>
    <scope>DEVELOPMENTAL STAGE</scope>
    <source>
        <strain>C57BL/6J</strain>
        <tissue>Testis</tissue>
    </source>
</reference>
<reference key="7">
    <citation type="journal article" date="1999" name="EMBO J.">
        <title>A single amino acid in E-cadherin responsible for host specificity towards the human pathogen Listeria monocytogenes.</title>
        <authorList>
            <person name="Lecuit M."/>
            <person name="Dramsi S."/>
            <person name="Gottardi C."/>
            <person name="Fedor-Chaiken M."/>
            <person name="Gumbiner B."/>
            <person name="Cossart P."/>
        </authorList>
    </citation>
    <scope>NOT A RECEPTOR FOR L.MONOCYTOGENES</scope>
    <scope>MUTAGENESIS OF GLU-172</scope>
</reference>
<reference key="8">
    <citation type="journal article" date="2002" name="Eur. J. Cell Biol.">
        <title>Loss of desmoglein 2 suggests essential functions for early embryonic development and proliferation of embryonal stem cells.</title>
        <authorList>
            <person name="Eshkind L."/>
            <person name="Tian Q."/>
            <person name="Schmidt A."/>
            <person name="Franke W.W."/>
            <person name="Windoffer R."/>
            <person name="Leube R.E."/>
        </authorList>
    </citation>
    <scope>SUBCELLULAR LOCATION</scope>
</reference>
<reference key="9">
    <citation type="journal article" date="2002" name="J. Biol. Chem.">
        <title>Galpha12 and Galpha13 negatively regulate the adhesive functions of cadherin.</title>
        <authorList>
            <person name="Meigs T.E."/>
            <person name="Fedor-Chaiken M."/>
            <person name="Kaplan D.D."/>
            <person name="Brackenbury R."/>
            <person name="Casey P.J."/>
        </authorList>
    </citation>
    <scope>FUNCTION</scope>
</reference>
<reference key="10">
    <citation type="journal article" date="2005" name="Cell">
        <title>Deconstructing the cadherin-catenin-actin complex.</title>
        <authorList>
            <person name="Yamada S."/>
            <person name="Pokutta S."/>
            <person name="Drees F."/>
            <person name="Weis W.I."/>
            <person name="Nelson W.J."/>
        </authorList>
    </citation>
    <scope>RECONSTITUTION OF THE E-CADHERIN/CATENIN ADHESION COMPLEX</scope>
    <scope>LACK OF ACTIN-BINDING BY THE E-CADHERIN/CATENIN ADHESION COMPLEX</scope>
</reference>
<reference key="11">
    <citation type="journal article" date="2008" name="J. Invest. Dermatol.">
        <title>Plakophilin-3-deficient mice develop hair coat abnormalities and are prone to cutaneous inflammation.</title>
        <authorList>
            <person name="Sklyarova T."/>
            <person name="Bonne S."/>
            <person name="D'Hooge P."/>
            <person name="Denecker G."/>
            <person name="Goossens S."/>
            <person name="De Rycke R."/>
            <person name="Borgonie G."/>
            <person name="Boesl M."/>
            <person name="van Roy F."/>
            <person name="van Hengel J."/>
        </authorList>
    </citation>
    <scope>TISSUE SPECIFICITY</scope>
</reference>
<reference key="12">
    <citation type="journal article" date="2008" name="Proc. Natl. Acad. Sci. U.S.A.">
        <title>EPLIN mediates linkage of the cadherin catenin complex to F-actin and stabilizes the circumferential actin belt.</title>
        <authorList>
            <person name="Abe K."/>
            <person name="Takeichi M."/>
        </authorList>
    </citation>
    <scope>LACK OF ACTIN-BINDING BY THE E-CADHERIN/CATENIN ADHESION COMPLEX</scope>
</reference>
<reference key="13">
    <citation type="journal article" date="2010" name="Cell">
        <title>A tissue-specific atlas of mouse protein phosphorylation and expression.</title>
        <authorList>
            <person name="Huttlin E.L."/>
            <person name="Jedrychowski M.P."/>
            <person name="Elias J.E."/>
            <person name="Goswami T."/>
            <person name="Rad R."/>
            <person name="Beausoleil S.A."/>
            <person name="Villen J."/>
            <person name="Haas W."/>
            <person name="Sowa M.E."/>
            <person name="Gygi S.P."/>
        </authorList>
    </citation>
    <scope>IDENTIFICATION BY MASS SPECTROMETRY [LARGE SCALE ANALYSIS]</scope>
    <source>
        <tissue>Kidney</tissue>
        <tissue>Liver</tissue>
        <tissue>Lung</tissue>
        <tissue>Pancreas</tissue>
    </source>
</reference>
<reference key="14">
    <citation type="journal article" date="2010" name="J. Biol. Chem.">
        <title>The TRPV4 channel contributes to intercellular junction formation in keratinocytes.</title>
        <authorList>
            <person name="Sokabe T."/>
            <person name="Fukumi-Tominaga T."/>
            <person name="Yonemura S."/>
            <person name="Mizuno A."/>
            <person name="Tominaga M."/>
        </authorList>
    </citation>
    <scope>INTERACTION WITH TRPV4 AND CTNNB1</scope>
</reference>
<reference key="15">
    <citation type="journal article" date="2016" name="Immunity">
        <title>Macrophage Epithelial Reprogramming Underlies Mycobacterial Granuloma Formation and Promotes Infection.</title>
        <authorList>
            <person name="Cronan M.R."/>
            <person name="Beerman R.W."/>
            <person name="Rosenberg A.F."/>
            <person name="Saelens J.W."/>
            <person name="Johnson M.G."/>
            <person name="Oehlers S.H."/>
            <person name="Sisk D.M."/>
            <person name="Jurcic Smith K.L."/>
            <person name="Medvitz N.A."/>
            <person name="Miller S.E."/>
            <person name="Trinh L.A."/>
            <person name="Fraser S.E."/>
            <person name="Madden J.F."/>
            <person name="Turner J."/>
            <person name="Stout J.E."/>
            <person name="Lee S."/>
            <person name="Tobin D.M."/>
        </authorList>
    </citation>
    <scope>SUBCELLULAR LOCATION</scope>
    <scope>TISSUE SPECIFICITY</scope>
</reference>
<reference key="16">
    <citation type="journal article" date="2016" name="J. Invest. Dermatol.">
        <title>Antagonistic Regulation of Intercellular Cohesion by Plakophilins 1 and 3.</title>
        <authorList>
            <person name="Keil R."/>
            <person name="Rietscher K."/>
            <person name="Hatzfeld M."/>
        </authorList>
    </citation>
    <scope>SUBCELLULAR LOCATION</scope>
    <scope>TISSUE SPECIFICITY</scope>
</reference>
<reference key="17">
    <citation type="journal article" date="2017" name="Proc. Natl. Acad. Sci. U.S.A.">
        <title>Discovery of an O-mannosylation pathway selectively serving cadherins and protocadherins.</title>
        <authorList>
            <person name="Larsen I.S.B."/>
            <person name="Narimatsu Y."/>
            <person name="Joshi H.J."/>
            <person name="Siukstaite L."/>
            <person name="Harrison O.J."/>
            <person name="Brasch J."/>
            <person name="Goodman K.M."/>
            <person name="Hansen L."/>
            <person name="Shapiro L."/>
            <person name="Honig B."/>
            <person name="Vakhrushev S.Y."/>
            <person name="Clausen H."/>
            <person name="Halim A."/>
        </authorList>
    </citation>
    <scope>GLYCOSYLATION AT SER-282; SER-287; THR-360; THR-472; THR-474; THR-511; THR-578; THR-580 AND THR-582</scope>
</reference>
<reference key="18">
    <citation type="journal article" date="2019" name="IScience">
        <title>EphA4-ADAM10 Interplay Patterns the Cochlear Sensory Epithelium through Local Disruption of Adherens Junctions.</title>
        <authorList>
            <person name="Defourny J."/>
            <person name="Peuckert C."/>
            <person name="Kullander K."/>
            <person name="Malgrange B."/>
        </authorList>
    </citation>
    <scope>IDENTIFICATION IN COMPLEX WITH ADAM10 AND EPHA4</scope>
    <scope>SUBCELLULAR LOCATION</scope>
    <scope>TISSUE SPECIFICITY</scope>
    <scope>PROTEOLYTIC CLEAVAGE</scope>
</reference>
<reference key="19">
    <citation type="journal article" date="1996" name="Nature">
        <title>Structural basis of calcium-induced E-cadherin rigidification and dimerization.</title>
        <authorList>
            <person name="Nagar B."/>
            <person name="Overduin M."/>
            <person name="Ikura M."/>
            <person name="Rini J.M."/>
        </authorList>
    </citation>
    <scope>X-RAY CRYSTALLOGRAPHY (2.0 ANGSTROMS) OF 157-370</scope>
    <scope>CALCIUM-BINDING SITES</scope>
</reference>
<reference key="20">
    <citation type="journal article" date="1996" name="J. Biomol. NMR">
        <title>1H, 15N and 13C resonance assignments and monomeric structure of the amino-terminal extracellular domain of epithelial cadherin.</title>
        <authorList>
            <person name="Overduin M."/>
            <person name="Tong K.I."/>
            <person name="Kay C.M."/>
            <person name="Ikura M."/>
        </authorList>
    </citation>
    <scope>STRUCTURE BY NMR OF 157-260</scope>
</reference>
<reference key="21">
    <citation type="journal article" date="2001" name="Cell">
        <title>The structure of the beta-catenin/E-cadherin complex and the molecular basis of diverse ligand recognition by beta-catenin.</title>
        <authorList>
            <person name="Huber A.H."/>
            <person name="Weis W.I."/>
        </authorList>
    </citation>
    <scope>X-RAY CRYSTALLOGRAPHY (3.0 ANGSTROMS) OF 577-728 IN COMPLEX WITH CTNNB1</scope>
    <scope>PHOSPHORYLATION</scope>
</reference>
<reference evidence="25" key="22">
    <citation type="journal article" date="2007" name="Cell">
        <title>Extending the host range of Listeria monocytogenes by rational protein design.</title>
        <authorList>
            <person name="Wollert T."/>
            <person name="Pasche B."/>
            <person name="Rochon M."/>
            <person name="Deppenmeier S."/>
            <person name="van den Heuvel J."/>
            <person name="Gruber A.D."/>
            <person name="Heinz D.W."/>
            <person name="Lengeling A."/>
            <person name="Schubert W.D."/>
        </authorList>
    </citation>
    <scope>X-RAY CRYSTALLOGRAPHY (1.85 ANGSTROMS) OF 158-256 IN COMPLEX WITH L.MONOCYTOGENES INLA</scope>
    <scope>MUTAGENESIS OF GLU-172 AND GLN-220</scope>
</reference>
<reference key="23">
    <citation type="journal article" date="2009" name="J. Biol. Chem.">
        <title>Interactions of plakoglobin and beta-catenin with desmosomal cadherins: basis of selective exclusion of alpha- and beta-catenin from desmosomes.</title>
        <authorList>
            <person name="Choi H.J."/>
            <person name="Gross J.C."/>
            <person name="Pokutta S."/>
            <person name="Weis W.I."/>
        </authorList>
    </citation>
    <scope>X-RAY CRYSTALLOGRAPHY (2.8 ANGSTROMS) OF 778-884 IN COMPLEX WITH HUMAN JUP</scope>
    <scope>PHOSPHORYLATION AT SER-840; SER-842 AND SER-848</scope>
</reference>
<organism>
    <name type="scientific">Mus musculus</name>
    <name type="common">Mouse</name>
    <dbReference type="NCBI Taxonomy" id="10090"/>
    <lineage>
        <taxon>Eukaryota</taxon>
        <taxon>Metazoa</taxon>
        <taxon>Chordata</taxon>
        <taxon>Craniata</taxon>
        <taxon>Vertebrata</taxon>
        <taxon>Euteleostomi</taxon>
        <taxon>Mammalia</taxon>
        <taxon>Eutheria</taxon>
        <taxon>Euarchontoglires</taxon>
        <taxon>Glires</taxon>
        <taxon>Rodentia</taxon>
        <taxon>Myomorpha</taxon>
        <taxon>Muroidea</taxon>
        <taxon>Muridae</taxon>
        <taxon>Murinae</taxon>
        <taxon>Mus</taxon>
        <taxon>Mus</taxon>
    </lineage>
</organism>
<proteinExistence type="evidence at protein level"/>
<accession>P09803</accession>
<accession>Q61377</accession>
<feature type="signal peptide" evidence="5">
    <location>
        <begin position="1"/>
        <end position="23"/>
    </location>
</feature>
<feature type="propeptide" id="PRO_0000003717" evidence="5">
    <location>
        <begin position="24"/>
        <end position="156"/>
    </location>
</feature>
<feature type="chain" id="PRO_0000003718" description="Cadherin-1">
    <location>
        <begin position="157"/>
        <end position="884"/>
    </location>
</feature>
<feature type="chain" id="PRO_0000236070" description="E-Cad/CTF1" evidence="5">
    <location>
        <begin position="703"/>
        <end position="884"/>
    </location>
</feature>
<feature type="chain" id="PRO_0000236071" description="E-Cad/CTF2" evidence="5">
    <location>
        <begin position="734"/>
        <end position="884"/>
    </location>
</feature>
<feature type="chain" id="PRO_0000236072" description="E-Cad/CTF3" evidence="5">
    <location>
        <begin position="753"/>
        <end position="884"/>
    </location>
</feature>
<feature type="topological domain" description="Extracellular" evidence="5">
    <location>
        <begin position="157"/>
        <end position="709"/>
    </location>
</feature>
<feature type="transmembrane region" description="Helical" evidence="5">
    <location>
        <begin position="710"/>
        <end position="733"/>
    </location>
</feature>
<feature type="topological domain" description="Cytoplasmic" evidence="5">
    <location>
        <begin position="734"/>
        <end position="884"/>
    </location>
</feature>
<feature type="domain" description="Cadherin 1" evidence="6">
    <location>
        <begin position="157"/>
        <end position="264"/>
    </location>
</feature>
<feature type="domain" description="Cadherin 2" evidence="6">
    <location>
        <begin position="265"/>
        <end position="377"/>
    </location>
</feature>
<feature type="domain" description="Cadherin 3" evidence="6">
    <location>
        <begin position="378"/>
        <end position="488"/>
    </location>
</feature>
<feature type="domain" description="Cadherin 4" evidence="6">
    <location>
        <begin position="489"/>
        <end position="595"/>
    </location>
</feature>
<feature type="domain" description="Cadherin 5" evidence="6">
    <location>
        <begin position="596"/>
        <end position="699"/>
    </location>
</feature>
<feature type="region of interest" description="Disordered" evidence="7">
    <location>
        <begin position="119"/>
        <end position="139"/>
    </location>
</feature>
<feature type="region of interest" description="Disordered" evidence="7">
    <location>
        <begin position="749"/>
        <end position="808"/>
    </location>
</feature>
<feature type="region of interest" description="Required for binding CTNND1 and PSEN1" evidence="1">
    <location>
        <begin position="760"/>
        <end position="771"/>
    </location>
</feature>
<feature type="region of interest" description="Required for binding alpha, beta and gamma catenins" evidence="1">
    <location>
        <begin position="813"/>
        <end position="884"/>
    </location>
</feature>
<feature type="compositionally biased region" description="Basic residues" evidence="7">
    <location>
        <begin position="121"/>
        <end position="131"/>
    </location>
</feature>
<feature type="compositionally biased region" description="Acidic residues" evidence="7">
    <location>
        <begin position="757"/>
        <end position="769"/>
    </location>
</feature>
<feature type="compositionally biased region" description="Basic and acidic residues" evidence="7">
    <location>
        <begin position="776"/>
        <end position="786"/>
    </location>
</feature>
<feature type="binding site">
    <location>
        <position position="259"/>
    </location>
    <ligand>
        <name>Ca(2+)</name>
        <dbReference type="ChEBI" id="CHEBI:29108"/>
        <label>1</label>
    </ligand>
</feature>
<feature type="binding site">
    <location>
        <position position="259"/>
    </location>
    <ligand>
        <name>Ca(2+)</name>
        <dbReference type="ChEBI" id="CHEBI:29108"/>
        <label>2</label>
    </ligand>
</feature>
<feature type="binding site">
    <location>
        <position position="290"/>
    </location>
    <ligand>
        <name>Ca(2+)</name>
        <dbReference type="ChEBI" id="CHEBI:29108"/>
        <label>3</label>
    </ligand>
</feature>
<feature type="site" description="Cleavage; by a metalloproteinase" evidence="1">
    <location>
        <begin position="702"/>
        <end position="703"/>
    </location>
</feature>
<feature type="site" description="Cleavage; by gamma-secretase/PS1" evidence="1">
    <location>
        <begin position="733"/>
        <end position="734"/>
    </location>
</feature>
<feature type="site" description="Cleavage; by caspase-3" evidence="1">
    <location>
        <begin position="752"/>
        <end position="753"/>
    </location>
</feature>
<feature type="modified residue" description="Phosphotyrosine; by SRC" evidence="3">
    <location>
        <position position="755"/>
    </location>
</feature>
<feature type="modified residue" description="Phosphotyrosine; by SRC" evidence="3">
    <location>
        <position position="756"/>
    </location>
</feature>
<feature type="modified residue" description="Phosphotyrosine; by SRC" evidence="3">
    <location>
        <position position="757"/>
    </location>
</feature>
<feature type="modified residue" description="Phosphoserine" evidence="3">
    <location>
        <position position="772"/>
    </location>
</feature>
<feature type="modified residue" description="Phosphoserine" evidence="3">
    <location>
        <position position="795"/>
    </location>
</feature>
<feature type="modified residue" description="Phosphoserine" evidence="16">
    <location>
        <position position="840"/>
    </location>
</feature>
<feature type="modified residue" description="Phosphoserine" evidence="16">
    <location>
        <position position="842"/>
    </location>
</feature>
<feature type="modified residue" description="Phosphoserine" evidence="16">
    <location>
        <position position="848"/>
    </location>
</feature>
<feature type="glycosylation site" description="O-linked (Man...) serine" evidence="20">
    <location>
        <position position="282"/>
    </location>
</feature>
<feature type="glycosylation site" description="O-linked (Man...) serine" evidence="20">
    <location>
        <position position="287"/>
    </location>
</feature>
<feature type="glycosylation site" description="O-linked (Man...) threonine" evidence="20">
    <location>
        <position position="360"/>
    </location>
</feature>
<feature type="glycosylation site" description="O-linked (Man...) threonine" evidence="20">
    <location>
        <position position="472"/>
    </location>
</feature>
<feature type="glycosylation site" description="O-linked (Man...) threonine" evidence="20">
    <location>
        <position position="474"/>
    </location>
</feature>
<feature type="glycosylation site" description="O-linked (Man...) threonine" evidence="20">
    <location>
        <position position="511"/>
    </location>
</feature>
<feature type="glycosylation site" description="N-linked (GlcNAc...) asparagine" evidence="5">
    <location>
        <position position="560"/>
    </location>
</feature>
<feature type="glycosylation site" description="O-linked (Man...) threonine" evidence="20">
    <location>
        <position position="578"/>
    </location>
</feature>
<feature type="glycosylation site" description="O-linked (Man...) threonine" evidence="20">
    <location>
        <position position="580"/>
    </location>
</feature>
<feature type="glycosylation site" description="O-linked (Man...) threonine" evidence="20">
    <location>
        <position position="582"/>
    </location>
</feature>
<feature type="glycosylation site" description="N-linked (GlcNAc...) asparagine" evidence="5">
    <location>
        <position position="639"/>
    </location>
</feature>
<feature type="mutagenesis site" description="Adheres to and takes up L.monocytogenes InlA coated beads." evidence="8">
    <original>E</original>
    <variation>P</variation>
    <location>
        <position position="172"/>
    </location>
</feature>
<feature type="mutagenesis site" description="Increased affinity for L.monocytogenes InlA. Greatly increased affinity; when associated with P-172." evidence="13">
    <original>Q</original>
    <variation>E</variation>
    <location>
        <position position="220"/>
    </location>
</feature>
<feature type="sequence conflict" description="In Ref. 2; CAA43292." evidence="24" ref="2">
    <original>E</original>
    <variation>P</variation>
    <location>
        <position position="267"/>
    </location>
</feature>
<feature type="sequence conflict" description="In Ref. 2; CAA43292." evidence="24" ref="2">
    <original>S</original>
    <variation>F</variation>
    <location>
        <position position="272"/>
    </location>
</feature>
<feature type="strand" evidence="32">
    <location>
        <begin position="160"/>
        <end position="166"/>
    </location>
</feature>
<feature type="strand" evidence="32">
    <location>
        <begin position="171"/>
        <end position="179"/>
    </location>
</feature>
<feature type="helix" evidence="32">
    <location>
        <begin position="183"/>
        <end position="186"/>
    </location>
</feature>
<feature type="strand" evidence="32">
    <location>
        <begin position="190"/>
        <end position="197"/>
    </location>
</feature>
<feature type="turn" evidence="32">
    <location>
        <begin position="198"/>
        <end position="200"/>
    </location>
</feature>
<feature type="strand" evidence="32">
    <location>
        <begin position="201"/>
        <end position="203"/>
    </location>
</feature>
<feature type="strand" evidence="32">
    <location>
        <begin position="206"/>
        <end position="209"/>
    </location>
</feature>
<feature type="turn" evidence="32">
    <location>
        <begin position="211"/>
        <end position="213"/>
    </location>
</feature>
<feature type="strand" evidence="32">
    <location>
        <begin position="215"/>
        <end position="218"/>
    </location>
</feature>
<feature type="turn" evidence="32">
    <location>
        <begin position="224"/>
        <end position="226"/>
    </location>
</feature>
<feature type="strand" evidence="32">
    <location>
        <begin position="228"/>
        <end position="238"/>
    </location>
</feature>
<feature type="turn" evidence="28">
    <location>
        <begin position="239"/>
        <end position="241"/>
    </location>
</feature>
<feature type="strand" evidence="29">
    <location>
        <begin position="243"/>
        <end position="245"/>
    </location>
</feature>
<feature type="strand" evidence="32">
    <location>
        <begin position="248"/>
        <end position="255"/>
    </location>
</feature>
<feature type="strand" evidence="32">
    <location>
        <begin position="263"/>
        <end position="265"/>
    </location>
</feature>
<feature type="strand" evidence="32">
    <location>
        <begin position="267"/>
        <end position="274"/>
    </location>
</feature>
<feature type="strand" evidence="32">
    <location>
        <begin position="282"/>
        <end position="285"/>
    </location>
</feature>
<feature type="turn" evidence="32">
    <location>
        <begin position="294"/>
        <end position="296"/>
    </location>
</feature>
<feature type="helix" evidence="28">
    <location>
        <begin position="298"/>
        <end position="300"/>
    </location>
</feature>
<feature type="strand" evidence="32">
    <location>
        <begin position="303"/>
        <end position="311"/>
    </location>
</feature>
<feature type="strand" evidence="31">
    <location>
        <begin position="314"/>
        <end position="316"/>
    </location>
</feature>
<feature type="strand" evidence="32">
    <location>
        <begin position="318"/>
        <end position="321"/>
    </location>
</feature>
<feature type="turn" evidence="32">
    <location>
        <begin position="323"/>
        <end position="325"/>
    </location>
</feature>
<feature type="strand" evidence="32">
    <location>
        <begin position="327"/>
        <end position="330"/>
    </location>
</feature>
<feature type="turn" evidence="32">
    <location>
        <begin position="337"/>
        <end position="339"/>
    </location>
</feature>
<feature type="strand" evidence="32">
    <location>
        <begin position="342"/>
        <end position="350"/>
    </location>
</feature>
<feature type="helix" evidence="32">
    <location>
        <begin position="352"/>
        <end position="354"/>
    </location>
</feature>
<feature type="strand" evidence="32">
    <location>
        <begin position="358"/>
        <end position="368"/>
    </location>
</feature>
<feature type="strand" evidence="31">
    <location>
        <begin position="376"/>
        <end position="389"/>
    </location>
</feature>
<feature type="strand" evidence="31">
    <location>
        <begin position="396"/>
        <end position="398"/>
    </location>
</feature>
<feature type="turn" evidence="31">
    <location>
        <begin position="409"/>
        <end position="411"/>
    </location>
</feature>
<feature type="strand" evidence="31">
    <location>
        <begin position="413"/>
        <end position="419"/>
    </location>
</feature>
<feature type="strand" evidence="31">
    <location>
        <begin position="425"/>
        <end position="429"/>
    </location>
</feature>
<feature type="turn" evidence="31">
    <location>
        <begin position="431"/>
        <end position="433"/>
    </location>
</feature>
<feature type="strand" evidence="31">
    <location>
        <begin position="436"/>
        <end position="442"/>
    </location>
</feature>
<feature type="turn" evidence="31">
    <location>
        <begin position="446"/>
        <end position="448"/>
    </location>
</feature>
<feature type="strand" evidence="31">
    <location>
        <begin position="450"/>
        <end position="462"/>
    </location>
</feature>
<feature type="strand" evidence="31">
    <location>
        <begin position="471"/>
        <end position="480"/>
    </location>
</feature>
<feature type="strand" evidence="31">
    <location>
        <begin position="487"/>
        <end position="492"/>
    </location>
</feature>
<feature type="strand" evidence="31">
    <location>
        <begin position="494"/>
        <end position="498"/>
    </location>
</feature>
<feature type="strand" evidence="31">
    <location>
        <begin position="506"/>
        <end position="509"/>
    </location>
</feature>
<feature type="strand" evidence="31">
    <location>
        <begin position="524"/>
        <end position="529"/>
    </location>
</feature>
<feature type="strand" evidence="31">
    <location>
        <begin position="535"/>
        <end position="537"/>
    </location>
</feature>
<feature type="turn" evidence="31">
    <location>
        <begin position="539"/>
        <end position="541"/>
    </location>
</feature>
<feature type="strand" evidence="31">
    <location>
        <begin position="543"/>
        <end position="546"/>
    </location>
</feature>
<feature type="turn" evidence="31">
    <location>
        <begin position="555"/>
        <end position="557"/>
    </location>
</feature>
<feature type="strand" evidence="31">
    <location>
        <begin position="560"/>
        <end position="570"/>
    </location>
</feature>
<feature type="strand" evidence="31">
    <location>
        <begin position="573"/>
        <end position="575"/>
    </location>
</feature>
<feature type="strand" evidence="31">
    <location>
        <begin position="579"/>
        <end position="588"/>
    </location>
</feature>
<feature type="strand" evidence="31">
    <location>
        <begin position="596"/>
        <end position="598"/>
    </location>
</feature>
<feature type="strand" evidence="31">
    <location>
        <begin position="603"/>
        <end position="608"/>
    </location>
</feature>
<feature type="strand" evidence="31">
    <location>
        <begin position="612"/>
        <end position="617"/>
    </location>
</feature>
<feature type="strand" evidence="31">
    <location>
        <begin position="624"/>
        <end position="627"/>
    </location>
</feature>
<feature type="strand" evidence="31">
    <location>
        <begin position="631"/>
        <end position="634"/>
    </location>
</feature>
<feature type="strand" evidence="31">
    <location>
        <begin position="637"/>
        <end position="639"/>
    </location>
</feature>
<feature type="strand" evidence="31">
    <location>
        <begin position="641"/>
        <end position="643"/>
    </location>
</feature>
<feature type="strand" evidence="31">
    <location>
        <begin position="649"/>
        <end position="655"/>
    </location>
</feature>
<feature type="strand" evidence="31">
    <location>
        <begin position="668"/>
        <end position="670"/>
    </location>
</feature>
<feature type="strand" evidence="31">
    <location>
        <begin position="673"/>
        <end position="675"/>
    </location>
</feature>
<feature type="strand" evidence="31">
    <location>
        <begin position="684"/>
        <end position="688"/>
    </location>
</feature>
<feature type="strand" evidence="30">
    <location>
        <begin position="785"/>
        <end position="789"/>
    </location>
</feature>
<feature type="turn" evidence="30">
    <location>
        <begin position="806"/>
        <end position="808"/>
    </location>
</feature>
<feature type="helix" evidence="26">
    <location>
        <begin position="818"/>
        <end position="822"/>
    </location>
</feature>
<feature type="strand" evidence="27">
    <location>
        <begin position="824"/>
        <end position="827"/>
    </location>
</feature>
<feature type="strand" evidence="30">
    <location>
        <begin position="830"/>
        <end position="834"/>
    </location>
</feature>
<feature type="turn" evidence="26">
    <location>
        <begin position="864"/>
        <end position="866"/>
    </location>
</feature>
<feature type="helix" evidence="26">
    <location>
        <begin position="869"/>
        <end position="871"/>
    </location>
</feature>
<feature type="helix" evidence="26">
    <location>
        <begin position="872"/>
        <end position="877"/>
    </location>
</feature>
<keyword id="KW-0002">3D-structure</keyword>
<keyword id="KW-0106">Calcium</keyword>
<keyword id="KW-0130">Cell adhesion</keyword>
<keyword id="KW-0965">Cell junction</keyword>
<keyword id="KW-1003">Cell membrane</keyword>
<keyword id="KW-0165">Cleavage on pair of basic residues</keyword>
<keyword id="KW-0963">Cytoplasm</keyword>
<keyword id="KW-0903">Direct protein sequencing</keyword>
<keyword id="KW-1015">Disulfide bond</keyword>
<keyword id="KW-0967">Endosome</keyword>
<keyword id="KW-0325">Glycoprotein</keyword>
<keyword id="KW-0333">Golgi apparatus</keyword>
<keyword id="KW-0472">Membrane</keyword>
<keyword id="KW-0479">Metal-binding</keyword>
<keyword id="KW-0597">Phosphoprotein</keyword>
<keyword id="KW-1185">Reference proteome</keyword>
<keyword id="KW-0677">Repeat</keyword>
<keyword id="KW-0732">Signal</keyword>
<keyword id="KW-0812">Transmembrane</keyword>
<keyword id="KW-1133">Transmembrane helix</keyword>
<keyword id="KW-0832">Ubl conjugation</keyword>
<sequence>MGARCRSFSALLLLLQVSSWLCQELEPESCSPGFSSEVYTFPVPERHLERGHVLGRVRFEGCTGRPRTAFFSEDSRFKVATDGTITVKRHLKLHKLETSFLVRARDSSHRELSTKVTLKSMGHHHHRHHHRDPASESNPELLMFPSVYPGLRRQKRDWVIPPISCPENEKGEFPKNLVQIKSNRDKETKVFYSITGQGADKPPVGVFIIERETGWLKVTQPLDREAIAKYILYSHAVSSNGEAVEDPMEIVITVTDQNDNRPEFTQEVFEGSVAEGAVPGTSVMKVSATDADDDVNTYNAAIAYTIVSQDPELPHKNMFTVNRDTGVISVLTSGLDRESYPTYTLVVQAADLQGEGLSTTAKAVITVKDINDNAPVFNPSTYQGQVPENEVNARIATLKVTDDDAPNTPAWKAVYTVVNDPDQQFVVVTDPTTNDGILKTAKGLDFEAKQQYILHVRVENEEPFEGSLVPSTATVTVDVVDVNEAPIFMPAERRVEVPEDFGVGQEITSYTAREPDTFMDQKITYRIWRDTANWLEINPETGAIFTRAEMDREDAEHVKNSTYVALIIATDDGSPIATGTGTLLLVLLDVNDNAPIPEPRNMQFCQRNPQPHIITILDPDLPPNTSPFTAELTHGASVNWTIEYNDAAQESLILQPRKDLEIGEYKIHLKLADNQNKDQVTTLDVHVCDCEGTVNNCMKAGIVAAGLQVPAILGILGGILALLILILLLLLFLRRRTVVKEPLLPPDDDTRDNVYYYDEEGGGEEDQDFDLSQLHRGLDARPEVTRNDVAPTLMSVPQYRPRPANPDEIGNFIDENLKAADSDPTAPPYDSLLVFDYEGSGSEAASLSSLNSSESDQDQDYDYLNEWGNRFKKLADMYGGGEDD</sequence>
<evidence type="ECO:0000250" key="1"/>
<evidence type="ECO:0000250" key="2">
    <source>
        <dbReference type="UniProtKB" id="F1PAA9"/>
    </source>
</evidence>
<evidence type="ECO:0000250" key="3">
    <source>
        <dbReference type="UniProtKB" id="P12830"/>
    </source>
</evidence>
<evidence type="ECO:0000250" key="4">
    <source>
        <dbReference type="UniProtKB" id="Q9R0T4"/>
    </source>
</evidence>
<evidence type="ECO:0000255" key="5"/>
<evidence type="ECO:0000255" key="6">
    <source>
        <dbReference type="PROSITE-ProRule" id="PRU00043"/>
    </source>
</evidence>
<evidence type="ECO:0000256" key="7">
    <source>
        <dbReference type="SAM" id="MobiDB-lite"/>
    </source>
</evidence>
<evidence type="ECO:0000269" key="8">
    <source>
    </source>
</evidence>
<evidence type="ECO:0000269" key="9">
    <source>
    </source>
</evidence>
<evidence type="ECO:0000269" key="10">
    <source>
    </source>
</evidence>
<evidence type="ECO:0000269" key="11">
    <source>
    </source>
</evidence>
<evidence type="ECO:0000269" key="12">
    <source>
    </source>
</evidence>
<evidence type="ECO:0000269" key="13">
    <source>
    </source>
</evidence>
<evidence type="ECO:0000269" key="14">
    <source>
    </source>
</evidence>
<evidence type="ECO:0000269" key="15">
    <source>
    </source>
</evidence>
<evidence type="ECO:0000269" key="16">
    <source>
    </source>
</evidence>
<evidence type="ECO:0000269" key="17">
    <source>
    </source>
</evidence>
<evidence type="ECO:0000269" key="18">
    <source>
    </source>
</evidence>
<evidence type="ECO:0000269" key="19">
    <source>
    </source>
</evidence>
<evidence type="ECO:0000269" key="20">
    <source>
    </source>
</evidence>
<evidence type="ECO:0000269" key="21">
    <source>
    </source>
</evidence>
<evidence type="ECO:0000269" key="22">
    <source>
    </source>
</evidence>
<evidence type="ECO:0000269" key="23">
    <source>
    </source>
</evidence>
<evidence type="ECO:0000305" key="24"/>
<evidence type="ECO:0007744" key="25">
    <source>
        <dbReference type="PDB" id="2OMW"/>
    </source>
</evidence>
<evidence type="ECO:0007829" key="26">
    <source>
        <dbReference type="PDB" id="1I7W"/>
    </source>
</evidence>
<evidence type="ECO:0007829" key="27">
    <source>
        <dbReference type="PDB" id="1I7X"/>
    </source>
</evidence>
<evidence type="ECO:0007829" key="28">
    <source>
        <dbReference type="PDB" id="1Q1P"/>
    </source>
</evidence>
<evidence type="ECO:0007829" key="29">
    <source>
        <dbReference type="PDB" id="2OMW"/>
    </source>
</evidence>
<evidence type="ECO:0007829" key="30">
    <source>
        <dbReference type="PDB" id="3IFQ"/>
    </source>
</evidence>
<evidence type="ECO:0007829" key="31">
    <source>
        <dbReference type="PDB" id="3Q2V"/>
    </source>
</evidence>
<evidence type="ECO:0007829" key="32">
    <source>
        <dbReference type="PDB" id="3QRB"/>
    </source>
</evidence>
<dbReference type="EMBL" id="X06115">
    <property type="protein sequence ID" value="CAA29488.1"/>
    <property type="molecule type" value="mRNA"/>
</dbReference>
<dbReference type="EMBL" id="X60961">
    <property type="protein sequence ID" value="CAA43292.1"/>
    <property type="molecule type" value="Genomic_DNA"/>
</dbReference>
<dbReference type="EMBL" id="X60962">
    <property type="protein sequence ID" value="CAA43292.1"/>
    <property type="status" value="JOINED"/>
    <property type="molecule type" value="Genomic_DNA"/>
</dbReference>
<dbReference type="EMBL" id="X60963">
    <property type="protein sequence ID" value="CAA43292.1"/>
    <property type="status" value="JOINED"/>
    <property type="molecule type" value="Genomic_DNA"/>
</dbReference>
<dbReference type="EMBL" id="X60964">
    <property type="protein sequence ID" value="CAA43292.1"/>
    <property type="status" value="JOINED"/>
    <property type="molecule type" value="Genomic_DNA"/>
</dbReference>
<dbReference type="EMBL" id="X60965">
    <property type="protein sequence ID" value="CAA43292.1"/>
    <property type="status" value="JOINED"/>
    <property type="molecule type" value="Genomic_DNA"/>
</dbReference>
<dbReference type="EMBL" id="X60966">
    <property type="protein sequence ID" value="CAA43292.1"/>
    <property type="status" value="JOINED"/>
    <property type="molecule type" value="Genomic_DNA"/>
</dbReference>
<dbReference type="EMBL" id="X60967">
    <property type="protein sequence ID" value="CAA43292.1"/>
    <property type="status" value="JOINED"/>
    <property type="molecule type" value="Genomic_DNA"/>
</dbReference>
<dbReference type="EMBL" id="X60968">
    <property type="protein sequence ID" value="CAA43292.1"/>
    <property type="status" value="JOINED"/>
    <property type="molecule type" value="Genomic_DNA"/>
</dbReference>
<dbReference type="EMBL" id="X60969">
    <property type="protein sequence ID" value="CAA43292.1"/>
    <property type="status" value="JOINED"/>
    <property type="molecule type" value="Genomic_DNA"/>
</dbReference>
<dbReference type="EMBL" id="X60970">
    <property type="protein sequence ID" value="CAA43292.1"/>
    <property type="status" value="JOINED"/>
    <property type="molecule type" value="Genomic_DNA"/>
</dbReference>
<dbReference type="EMBL" id="X60971">
    <property type="protein sequence ID" value="CAA43292.1"/>
    <property type="status" value="JOINED"/>
    <property type="molecule type" value="Genomic_DNA"/>
</dbReference>
<dbReference type="EMBL" id="X60972">
    <property type="protein sequence ID" value="CAA43292.1"/>
    <property type="status" value="JOINED"/>
    <property type="molecule type" value="Genomic_DNA"/>
</dbReference>
<dbReference type="EMBL" id="X60973">
    <property type="protein sequence ID" value="CAA43292.1"/>
    <property type="status" value="JOINED"/>
    <property type="molecule type" value="Genomic_DNA"/>
</dbReference>
<dbReference type="EMBL" id="X60974">
    <property type="protein sequence ID" value="CAA43292.1"/>
    <property type="status" value="JOINED"/>
    <property type="molecule type" value="Genomic_DNA"/>
</dbReference>
<dbReference type="EMBL" id="X60975">
    <property type="protein sequence ID" value="CAA43292.1"/>
    <property type="status" value="JOINED"/>
    <property type="molecule type" value="Genomic_DNA"/>
</dbReference>
<dbReference type="EMBL" id="X06339">
    <property type="protein sequence ID" value="CAA29645.1"/>
    <property type="molecule type" value="mRNA"/>
</dbReference>
<dbReference type="EMBL" id="M81449">
    <property type="protein sequence ID" value="AAA37352.1"/>
    <property type="molecule type" value="Genomic_DNA"/>
</dbReference>
<dbReference type="CCDS" id="CCDS22638.1"/>
<dbReference type="PIR" id="S04528">
    <property type="entry name" value="IJMSCE"/>
</dbReference>
<dbReference type="PIR" id="S34438">
    <property type="entry name" value="S34438"/>
</dbReference>
<dbReference type="RefSeq" id="NP_033994.1">
    <property type="nucleotide sequence ID" value="NM_009864.3"/>
</dbReference>
<dbReference type="PDB" id="1EDH">
    <property type="method" value="X-ray"/>
    <property type="resolution" value="2.00 A"/>
    <property type="chains" value="A/B=156-380"/>
</dbReference>
<dbReference type="PDB" id="1FF5">
    <property type="method" value="X-ray"/>
    <property type="resolution" value="2.93 A"/>
    <property type="chains" value="A/B=157-374"/>
</dbReference>
<dbReference type="PDB" id="1I7W">
    <property type="method" value="X-ray"/>
    <property type="resolution" value="2.00 A"/>
    <property type="chains" value="B/D=734-884"/>
</dbReference>
<dbReference type="PDB" id="1I7X">
    <property type="method" value="X-ray"/>
    <property type="resolution" value="3.00 A"/>
    <property type="chains" value="B/D=734-884"/>
</dbReference>
<dbReference type="PDB" id="1Q1P">
    <property type="method" value="X-ray"/>
    <property type="resolution" value="3.20 A"/>
    <property type="chains" value="A=158-369"/>
</dbReference>
<dbReference type="PDB" id="1SUH">
    <property type="method" value="NMR"/>
    <property type="chains" value="A=156-300"/>
</dbReference>
<dbReference type="PDB" id="2OMW">
    <property type="method" value="X-ray"/>
    <property type="resolution" value="1.85 A"/>
    <property type="chains" value="B=158-256"/>
</dbReference>
<dbReference type="PDB" id="2QVF">
    <property type="method" value="X-ray"/>
    <property type="resolution" value="2.40 A"/>
    <property type="chains" value="B=157-369"/>
</dbReference>
<dbReference type="PDB" id="3IFQ">
    <property type="method" value="X-ray"/>
    <property type="resolution" value="2.80 A"/>
    <property type="chains" value="C/D=778-884"/>
</dbReference>
<dbReference type="PDB" id="3LNE">
    <property type="method" value="X-ray"/>
    <property type="resolution" value="2.00 A"/>
    <property type="chains" value="A=157-369"/>
</dbReference>
<dbReference type="PDB" id="3LNF">
    <property type="method" value="X-ray"/>
    <property type="resolution" value="2.50 A"/>
    <property type="chains" value="A/B=157-369"/>
</dbReference>
<dbReference type="PDB" id="3LNG">
    <property type="method" value="X-ray"/>
    <property type="resolution" value="2.70 A"/>
    <property type="chains" value="A/B=157-369"/>
</dbReference>
<dbReference type="PDB" id="3LNH">
    <property type="method" value="X-ray"/>
    <property type="resolution" value="2.60 A"/>
    <property type="chains" value="A/B=157-369"/>
</dbReference>
<dbReference type="PDB" id="3LNI">
    <property type="method" value="X-ray"/>
    <property type="resolution" value="2.30 A"/>
    <property type="chains" value="A/B=157-369"/>
</dbReference>
<dbReference type="PDB" id="3Q2L">
    <property type="method" value="X-ray"/>
    <property type="resolution" value="2.70 A"/>
    <property type="chains" value="A/B=157-369"/>
</dbReference>
<dbReference type="PDB" id="3Q2N">
    <property type="method" value="X-ray"/>
    <property type="resolution" value="2.73 A"/>
    <property type="chains" value="A/B=157-369"/>
</dbReference>
<dbReference type="PDB" id="3Q2V">
    <property type="method" value="X-ray"/>
    <property type="resolution" value="3.40 A"/>
    <property type="chains" value="A/B=157-700"/>
</dbReference>
<dbReference type="PDB" id="3QRB">
    <property type="method" value="X-ray"/>
    <property type="resolution" value="1.80 A"/>
    <property type="chains" value="A/B=157-369"/>
</dbReference>
<dbReference type="PDB" id="4QD2">
    <property type="method" value="X-ray"/>
    <property type="resolution" value="2.40 A"/>
    <property type="chains" value="E/J=157-369"/>
</dbReference>
<dbReference type="PDB" id="7AR4">
    <property type="method" value="X-ray"/>
    <property type="resolution" value="2.60 A"/>
    <property type="chains" value="PaP=783-798"/>
</dbReference>
<dbReference type="PDBsum" id="1EDH"/>
<dbReference type="PDBsum" id="1FF5"/>
<dbReference type="PDBsum" id="1I7W"/>
<dbReference type="PDBsum" id="1I7X"/>
<dbReference type="PDBsum" id="1Q1P"/>
<dbReference type="PDBsum" id="1SUH"/>
<dbReference type="PDBsum" id="2OMW"/>
<dbReference type="PDBsum" id="2QVF"/>
<dbReference type="PDBsum" id="3IFQ"/>
<dbReference type="PDBsum" id="3LNE"/>
<dbReference type="PDBsum" id="3LNF"/>
<dbReference type="PDBsum" id="3LNG"/>
<dbReference type="PDBsum" id="3LNH"/>
<dbReference type="PDBsum" id="3LNI"/>
<dbReference type="PDBsum" id="3Q2L"/>
<dbReference type="PDBsum" id="3Q2N"/>
<dbReference type="PDBsum" id="3Q2V"/>
<dbReference type="PDBsum" id="3QRB"/>
<dbReference type="PDBsum" id="4QD2"/>
<dbReference type="PDBsum" id="7AR4"/>
<dbReference type="SMR" id="P09803"/>
<dbReference type="BioGRID" id="198631">
    <property type="interactions" value="42"/>
</dbReference>
<dbReference type="CORUM" id="P09803"/>
<dbReference type="DIP" id="DIP-29635N"/>
<dbReference type="FunCoup" id="P09803">
    <property type="interactions" value="684"/>
</dbReference>
<dbReference type="IntAct" id="P09803">
    <property type="interactions" value="41"/>
</dbReference>
<dbReference type="MINT" id="P09803"/>
<dbReference type="STRING" id="10090.ENSMUSP00000000312"/>
<dbReference type="GlyCosmos" id="P09803">
    <property type="glycosylation" value="11 sites, No reported glycans"/>
</dbReference>
<dbReference type="GlyGen" id="P09803">
    <property type="glycosylation" value="12 sites, 1 O-linked glycan (1 site)"/>
</dbReference>
<dbReference type="iPTMnet" id="P09803"/>
<dbReference type="PhosphoSitePlus" id="P09803"/>
<dbReference type="CPTAC" id="non-CPTAC-3565"/>
<dbReference type="jPOST" id="P09803"/>
<dbReference type="PaxDb" id="10090-ENSMUSP00000000312"/>
<dbReference type="PeptideAtlas" id="P09803"/>
<dbReference type="ProteomicsDB" id="265497"/>
<dbReference type="DNASU" id="12550"/>
<dbReference type="GeneID" id="12550"/>
<dbReference type="KEGG" id="mmu:12550"/>
<dbReference type="UCSC" id="uc009ngi.1">
    <property type="organism name" value="mouse"/>
</dbReference>
<dbReference type="AGR" id="MGI:88354"/>
<dbReference type="CTD" id="999"/>
<dbReference type="MGI" id="MGI:88354">
    <property type="gene designation" value="Cdh1"/>
</dbReference>
<dbReference type="eggNOG" id="KOG3594">
    <property type="taxonomic scope" value="Eukaryota"/>
</dbReference>
<dbReference type="InParanoid" id="P09803"/>
<dbReference type="OrthoDB" id="6079678at2759"/>
<dbReference type="PhylomeDB" id="P09803"/>
<dbReference type="TreeFam" id="TF316817"/>
<dbReference type="Reactome" id="R-MMU-1474228">
    <property type="pathway name" value="Degradation of the extracellular matrix"/>
</dbReference>
<dbReference type="Reactome" id="R-MMU-216083">
    <property type="pathway name" value="Integrin cell surface interactions"/>
</dbReference>
<dbReference type="Reactome" id="R-MMU-351906">
    <property type="pathway name" value="Apoptotic cleavage of cell adhesion proteins"/>
</dbReference>
<dbReference type="Reactome" id="R-MMU-418990">
    <property type="pathway name" value="Adherens junctions interactions"/>
</dbReference>
<dbReference type="Reactome" id="R-MMU-5626467">
    <property type="pathway name" value="RHO GTPases activate IQGAPs"/>
</dbReference>
<dbReference type="BioGRID-ORCS" id="12550">
    <property type="hits" value="4 hits in 79 CRISPR screens"/>
</dbReference>
<dbReference type="ChiTaRS" id="Cdh1">
    <property type="organism name" value="mouse"/>
</dbReference>
<dbReference type="EvolutionaryTrace" id="P09803"/>
<dbReference type="PRO" id="PR:P09803"/>
<dbReference type="Proteomes" id="UP000000589">
    <property type="component" value="Unplaced"/>
</dbReference>
<dbReference type="RNAct" id="P09803">
    <property type="molecule type" value="protein"/>
</dbReference>
<dbReference type="GO" id="GO:0005912">
    <property type="term" value="C:adherens junction"/>
    <property type="evidence" value="ECO:0000314"/>
    <property type="project" value="UniProtKB"/>
</dbReference>
<dbReference type="GO" id="GO:0043296">
    <property type="term" value="C:apical junction complex"/>
    <property type="evidence" value="ECO:0000314"/>
    <property type="project" value="MGI"/>
</dbReference>
<dbReference type="GO" id="GO:0045177">
    <property type="term" value="C:apical part of cell"/>
    <property type="evidence" value="ECO:0000314"/>
    <property type="project" value="MGI"/>
</dbReference>
<dbReference type="GO" id="GO:0030424">
    <property type="term" value="C:axon"/>
    <property type="evidence" value="ECO:0000314"/>
    <property type="project" value="MGI"/>
</dbReference>
<dbReference type="GO" id="GO:0043679">
    <property type="term" value="C:axon terminus"/>
    <property type="evidence" value="ECO:0000314"/>
    <property type="project" value="MGI"/>
</dbReference>
<dbReference type="GO" id="GO:0016323">
    <property type="term" value="C:basolateral plasma membrane"/>
    <property type="evidence" value="ECO:0000314"/>
    <property type="project" value="MGI"/>
</dbReference>
<dbReference type="GO" id="GO:0016342">
    <property type="term" value="C:catenin complex"/>
    <property type="evidence" value="ECO:0000314"/>
    <property type="project" value="MGI"/>
</dbReference>
<dbReference type="GO" id="GO:0071944">
    <property type="term" value="C:cell periphery"/>
    <property type="evidence" value="ECO:0000314"/>
    <property type="project" value="MGI"/>
</dbReference>
<dbReference type="GO" id="GO:0009986">
    <property type="term" value="C:cell surface"/>
    <property type="evidence" value="ECO:0000314"/>
    <property type="project" value="MGI"/>
</dbReference>
<dbReference type="GO" id="GO:0005911">
    <property type="term" value="C:cell-cell junction"/>
    <property type="evidence" value="ECO:0000314"/>
    <property type="project" value="UniProtKB"/>
</dbReference>
<dbReference type="GO" id="GO:0005737">
    <property type="term" value="C:cytoplasm"/>
    <property type="evidence" value="ECO:0000314"/>
    <property type="project" value="UniProtKB"/>
</dbReference>
<dbReference type="GO" id="GO:0030057">
    <property type="term" value="C:desmosome"/>
    <property type="evidence" value="ECO:0007669"/>
    <property type="project" value="UniProtKB-SubCell"/>
</dbReference>
<dbReference type="GO" id="GO:0005768">
    <property type="term" value="C:endosome"/>
    <property type="evidence" value="ECO:0007669"/>
    <property type="project" value="UniProtKB-SubCell"/>
</dbReference>
<dbReference type="GO" id="GO:0016600">
    <property type="term" value="C:flotillin complex"/>
    <property type="evidence" value="ECO:0000314"/>
    <property type="project" value="UniProtKB"/>
</dbReference>
<dbReference type="GO" id="GO:0005794">
    <property type="term" value="C:Golgi apparatus"/>
    <property type="evidence" value="ECO:0007669"/>
    <property type="project" value="UniProtKB-SubCell"/>
</dbReference>
<dbReference type="GO" id="GO:0043219">
    <property type="term" value="C:lateral loop"/>
    <property type="evidence" value="ECO:0000314"/>
    <property type="project" value="BHF-UCL"/>
</dbReference>
<dbReference type="GO" id="GO:0005902">
    <property type="term" value="C:microvillus"/>
    <property type="evidence" value="ECO:0000314"/>
    <property type="project" value="MGI"/>
</dbReference>
<dbReference type="GO" id="GO:0033268">
    <property type="term" value="C:node of Ranvier"/>
    <property type="evidence" value="ECO:0000314"/>
    <property type="project" value="BHF-UCL"/>
</dbReference>
<dbReference type="GO" id="GO:0005886">
    <property type="term" value="C:plasma membrane"/>
    <property type="evidence" value="ECO:0000314"/>
    <property type="project" value="UniProtKB"/>
</dbReference>
<dbReference type="GO" id="GO:0043220">
    <property type="term" value="C:Schmidt-Lanterman incisure"/>
    <property type="evidence" value="ECO:0000314"/>
    <property type="project" value="BHF-UCL"/>
</dbReference>
<dbReference type="GO" id="GO:0045294">
    <property type="term" value="F:alpha-catenin binding"/>
    <property type="evidence" value="ECO:0000353"/>
    <property type="project" value="MGI"/>
</dbReference>
<dbReference type="GO" id="GO:0008013">
    <property type="term" value="F:beta-catenin binding"/>
    <property type="evidence" value="ECO:0000314"/>
    <property type="project" value="BHF-UCL"/>
</dbReference>
<dbReference type="GO" id="GO:0005509">
    <property type="term" value="F:calcium ion binding"/>
    <property type="evidence" value="ECO:0000314"/>
    <property type="project" value="MGI"/>
</dbReference>
<dbReference type="GO" id="GO:0008092">
    <property type="term" value="F:cytoskeletal protein binding"/>
    <property type="evidence" value="ECO:0000315"/>
    <property type="project" value="MGI"/>
</dbReference>
<dbReference type="GO" id="GO:0042802">
    <property type="term" value="F:identical protein binding"/>
    <property type="evidence" value="ECO:0000353"/>
    <property type="project" value="IntAct"/>
</dbReference>
<dbReference type="GO" id="GO:0060090">
    <property type="term" value="F:molecular adaptor activity"/>
    <property type="evidence" value="ECO:0000314"/>
    <property type="project" value="DisProt"/>
</dbReference>
<dbReference type="GO" id="GO:0019904">
    <property type="term" value="F:protein domain specific binding"/>
    <property type="evidence" value="ECO:0000353"/>
    <property type="project" value="MGI"/>
</dbReference>
<dbReference type="GO" id="GO:0019903">
    <property type="term" value="F:protein phosphatase binding"/>
    <property type="evidence" value="ECO:0000353"/>
    <property type="project" value="UniProtKB"/>
</dbReference>
<dbReference type="GO" id="GO:0030036">
    <property type="term" value="P:actin cytoskeleton organization"/>
    <property type="evidence" value="ECO:0000315"/>
    <property type="project" value="MGI"/>
</dbReference>
<dbReference type="GO" id="GO:0070830">
    <property type="term" value="P:bicellular tight junction assembly"/>
    <property type="evidence" value="ECO:0000315"/>
    <property type="project" value="MGI"/>
</dbReference>
<dbReference type="GO" id="GO:0016339">
    <property type="term" value="P:calcium-dependent cell-cell adhesion via plasma membrane cell adhesion molecules"/>
    <property type="evidence" value="ECO:0000314"/>
    <property type="project" value="MGI"/>
</dbReference>
<dbReference type="GO" id="GO:0060070">
    <property type="term" value="P:canonical Wnt signaling pathway"/>
    <property type="evidence" value="ECO:0000315"/>
    <property type="project" value="MGI"/>
</dbReference>
<dbReference type="GO" id="GO:0098609">
    <property type="term" value="P:cell-cell adhesion"/>
    <property type="evidence" value="ECO:0000315"/>
    <property type="project" value="MGI"/>
</dbReference>
<dbReference type="GO" id="GO:0044331">
    <property type="term" value="P:cell-cell adhesion mediated by cadherin"/>
    <property type="evidence" value="ECO:0000315"/>
    <property type="project" value="MGI"/>
</dbReference>
<dbReference type="GO" id="GO:0071230">
    <property type="term" value="P:cellular response to amino acid stimulus"/>
    <property type="evidence" value="ECO:0000314"/>
    <property type="project" value="MGI"/>
</dbReference>
<dbReference type="GO" id="GO:0090102">
    <property type="term" value="P:cochlea development"/>
    <property type="evidence" value="ECO:0000314"/>
    <property type="project" value="UniProtKB"/>
</dbReference>
<dbReference type="GO" id="GO:0046697">
    <property type="term" value="P:decidualization"/>
    <property type="evidence" value="ECO:0000315"/>
    <property type="project" value="CACAO"/>
</dbReference>
<dbReference type="GO" id="GO:0002159">
    <property type="term" value="P:desmosome assembly"/>
    <property type="evidence" value="ECO:0000250"/>
    <property type="project" value="UniProtKB"/>
</dbReference>
<dbReference type="GO" id="GO:0007566">
    <property type="term" value="P:embryo implantation"/>
    <property type="evidence" value="ECO:0000315"/>
    <property type="project" value="CACAO"/>
</dbReference>
<dbReference type="GO" id="GO:0003382">
    <property type="term" value="P:epithelial cell morphogenesis"/>
    <property type="evidence" value="ECO:0000315"/>
    <property type="project" value="MGI"/>
</dbReference>
<dbReference type="GO" id="GO:0061436">
    <property type="term" value="P:establishment of skin barrier"/>
    <property type="evidence" value="ECO:0000315"/>
    <property type="project" value="MGI"/>
</dbReference>
<dbReference type="GO" id="GO:0007156">
    <property type="term" value="P:homophilic cell adhesion via plasma membrane adhesion molecules"/>
    <property type="evidence" value="ECO:0007669"/>
    <property type="project" value="InterPro"/>
</dbReference>
<dbReference type="GO" id="GO:0001701">
    <property type="term" value="P:in utero embryonic development"/>
    <property type="evidence" value="ECO:0000315"/>
    <property type="project" value="MGI"/>
</dbReference>
<dbReference type="GO" id="GO:0060576">
    <property type="term" value="P:intestinal epithelial cell development"/>
    <property type="evidence" value="ECO:0000315"/>
    <property type="project" value="MGI"/>
</dbReference>
<dbReference type="GO" id="GO:0090090">
    <property type="term" value="P:negative regulation of canonical Wnt signaling pathway"/>
    <property type="evidence" value="ECO:0000315"/>
    <property type="project" value="MGI"/>
</dbReference>
<dbReference type="GO" id="GO:0050680">
    <property type="term" value="P:negative regulation of epithelial cell proliferation"/>
    <property type="evidence" value="ECO:0000315"/>
    <property type="project" value="MGI"/>
</dbReference>
<dbReference type="GO" id="GO:1903077">
    <property type="term" value="P:negative regulation of protein localization to plasma membrane"/>
    <property type="evidence" value="ECO:0000315"/>
    <property type="project" value="MGI"/>
</dbReference>
<dbReference type="GO" id="GO:0010955">
    <property type="term" value="P:negative regulation of protein processing"/>
    <property type="evidence" value="ECO:0000315"/>
    <property type="project" value="MGI"/>
</dbReference>
<dbReference type="GO" id="GO:0022409">
    <property type="term" value="P:positive regulation of cell-cell adhesion"/>
    <property type="evidence" value="ECO:0000315"/>
    <property type="project" value="MGI"/>
</dbReference>
<dbReference type="GO" id="GO:1903829">
    <property type="term" value="P:positive regulation of protein localization"/>
    <property type="evidence" value="ECO:0000250"/>
    <property type="project" value="UniProtKB"/>
</dbReference>
<dbReference type="GO" id="GO:0072659">
    <property type="term" value="P:protein localization to plasma membrane"/>
    <property type="evidence" value="ECO:0000314"/>
    <property type="project" value="UniProtKB"/>
</dbReference>
<dbReference type="GO" id="GO:0060693">
    <property type="term" value="P:regulation of branching involved in salivary gland morphogenesis"/>
    <property type="evidence" value="ECO:0000315"/>
    <property type="project" value="MGI"/>
</dbReference>
<dbReference type="GO" id="GO:0010468">
    <property type="term" value="P:regulation of gene expression"/>
    <property type="evidence" value="ECO:0000250"/>
    <property type="project" value="UniProtKB"/>
</dbReference>
<dbReference type="GO" id="GO:2001222">
    <property type="term" value="P:regulation of neuron migration"/>
    <property type="evidence" value="ECO:0000314"/>
    <property type="project" value="MGI"/>
</dbReference>
<dbReference type="GO" id="GO:0032880">
    <property type="term" value="P:regulation of protein localization"/>
    <property type="evidence" value="ECO:0000315"/>
    <property type="project" value="MGI"/>
</dbReference>
<dbReference type="GO" id="GO:2000008">
    <property type="term" value="P:regulation of protein localization to cell surface"/>
    <property type="evidence" value="ECO:0000315"/>
    <property type="project" value="MGI"/>
</dbReference>
<dbReference type="GO" id="GO:0060662">
    <property type="term" value="P:salivary gland cavitation"/>
    <property type="evidence" value="ECO:0000315"/>
    <property type="project" value="MGI"/>
</dbReference>
<dbReference type="GO" id="GO:0007605">
    <property type="term" value="P:sensory perception of sound"/>
    <property type="evidence" value="ECO:0000315"/>
    <property type="project" value="MGI"/>
</dbReference>
<dbReference type="GO" id="GO:0001829">
    <property type="term" value="P:trophectodermal cell differentiation"/>
    <property type="evidence" value="ECO:0000315"/>
    <property type="project" value="MGI"/>
</dbReference>
<dbReference type="GO" id="GO:0035847">
    <property type="term" value="P:uterine epithelium development"/>
    <property type="evidence" value="ECO:0000315"/>
    <property type="project" value="CACAO"/>
</dbReference>
<dbReference type="CDD" id="cd00031">
    <property type="entry name" value="CA_like"/>
    <property type="match status" value="1"/>
</dbReference>
<dbReference type="CDD" id="cd11304">
    <property type="entry name" value="Cadherin_repeat"/>
    <property type="match status" value="3"/>
</dbReference>
<dbReference type="DisProt" id="DP00159"/>
<dbReference type="FunFam" id="2.60.40.60:FF:000011">
    <property type="entry name" value="Cadherin 1"/>
    <property type="match status" value="1"/>
</dbReference>
<dbReference type="FunFam" id="2.60.40.60:FF:000191">
    <property type="entry name" value="Cadherin 1"/>
    <property type="match status" value="1"/>
</dbReference>
<dbReference type="FunFam" id="2.60.40.60:FF:000019">
    <property type="entry name" value="Cadherin 2"/>
    <property type="match status" value="1"/>
</dbReference>
<dbReference type="FunFam" id="2.60.40.60:FF:000022">
    <property type="entry name" value="Cadherin 2"/>
    <property type="match status" value="1"/>
</dbReference>
<dbReference type="FunFam" id="2.60.40.60:FF:000027">
    <property type="entry name" value="Cadherin 2"/>
    <property type="match status" value="1"/>
</dbReference>
<dbReference type="FunFam" id="4.10.900.10:FF:000001">
    <property type="entry name" value="Cadherin 2"/>
    <property type="match status" value="1"/>
</dbReference>
<dbReference type="FunFam" id="2.60.40.60:FF:000031">
    <property type="entry name" value="Cadherin 3"/>
    <property type="match status" value="1"/>
</dbReference>
<dbReference type="Gene3D" id="2.60.40.60">
    <property type="entry name" value="Cadherins"/>
    <property type="match status" value="6"/>
</dbReference>
<dbReference type="Gene3D" id="4.10.900.10">
    <property type="entry name" value="TCF3-CBD (Catenin binding domain)"/>
    <property type="match status" value="1"/>
</dbReference>
<dbReference type="IDEAL" id="IID50003"/>
<dbReference type="InterPro" id="IPR039808">
    <property type="entry name" value="Cadherin"/>
</dbReference>
<dbReference type="InterPro" id="IPR002126">
    <property type="entry name" value="Cadherin-like_dom"/>
</dbReference>
<dbReference type="InterPro" id="IPR015919">
    <property type="entry name" value="Cadherin-like_sf"/>
</dbReference>
<dbReference type="InterPro" id="IPR020894">
    <property type="entry name" value="Cadherin_CS"/>
</dbReference>
<dbReference type="InterPro" id="IPR014868">
    <property type="entry name" value="Cadherin_pro_dom"/>
</dbReference>
<dbReference type="InterPro" id="IPR000233">
    <property type="entry name" value="Cadherin_Y-type_LIR"/>
</dbReference>
<dbReference type="InterPro" id="IPR027397">
    <property type="entry name" value="Catenin-bd_sf"/>
</dbReference>
<dbReference type="PANTHER" id="PTHR24027:SF319">
    <property type="entry name" value="CADHERIN-1"/>
    <property type="match status" value="1"/>
</dbReference>
<dbReference type="PANTHER" id="PTHR24027">
    <property type="entry name" value="CADHERIN-23"/>
    <property type="match status" value="1"/>
</dbReference>
<dbReference type="Pfam" id="PF01049">
    <property type="entry name" value="CADH_Y-type_LIR"/>
    <property type="match status" value="1"/>
</dbReference>
<dbReference type="Pfam" id="PF00028">
    <property type="entry name" value="Cadherin"/>
    <property type="match status" value="5"/>
</dbReference>
<dbReference type="Pfam" id="PF08758">
    <property type="entry name" value="Cadherin_pro"/>
    <property type="match status" value="1"/>
</dbReference>
<dbReference type="PRINTS" id="PR00205">
    <property type="entry name" value="CADHERIN"/>
</dbReference>
<dbReference type="SMART" id="SM00112">
    <property type="entry name" value="CA"/>
    <property type="match status" value="4"/>
</dbReference>
<dbReference type="SMART" id="SM01055">
    <property type="entry name" value="Cadherin_pro"/>
    <property type="match status" value="1"/>
</dbReference>
<dbReference type="SUPFAM" id="SSF49313">
    <property type="entry name" value="Cadherin-like"/>
    <property type="match status" value="6"/>
</dbReference>
<dbReference type="PROSITE" id="PS00232">
    <property type="entry name" value="CADHERIN_1"/>
    <property type="match status" value="3"/>
</dbReference>
<dbReference type="PROSITE" id="PS50268">
    <property type="entry name" value="CADHERIN_2"/>
    <property type="match status" value="4"/>
</dbReference>
<name>CADH1_MOUSE</name>
<gene>
    <name type="primary">Cdh1</name>
</gene>
<comment type="function">
    <text evidence="2 3 10">Cadherins are calcium-dependent cell adhesion proteins (PubMed:11976333). They preferentially interact with themselves in a homophilic manner in connecting cells; cadherins may thus contribute to the sorting of heterogeneous cell types. CDH1 is involved in mechanisms regulating cell-cell adhesions, mobility and proliferation of epithelial cells (PubMed:11976333). Promotes organization of radial actin fiber structure and cellular response to contractile forces, via its interaction with AMOTL2 which facilitates anchoring of radial actin fibers to CDH1 junction complexes at the cell membrane (By similarity). Plays a role in the early stages of desmosome cell-cell junction formation via facilitating the recruitment of DSG2 and DSP to desmosome plaques (By similarity). Has a potent invasive suppressor role. It is a ligand for integrin alpha-E/beta-7 (By similarity).</text>
</comment>
<comment type="function">
    <text evidence="3">E-Cad/CTF2 promotes non-amyloidogenic degradation of Abeta precursors. Has a strong inhibitory effect on APP C99 and C83 production (By similarity).</text>
</comment>
<comment type="function">
    <text evidence="8">(Microbial infection) Does not function as a receptor for L.monocytogenes internalin A (InlA); mutating a single surface-exposed residue confers receptor activity to this protein and promotes uptake of the bacteria.</text>
</comment>
<comment type="subunit">
    <text evidence="2 3 4 9 12 15 16 17 21 22">Homodimer; disulfide-linked (By similarity). Component of an E-cadherin/ catenin adhesion complex composed of at least E-cadherin/CDH1, beta-catenin/CTNNB1 or gamma-catenin/JUP, and potentially alpha-catenin/CTNNA1; the complex is located to adherens junctions (PubMed:19759396, PubMed:7982500). Found in a complex composed of CDH1, RAP1A and PKP3; PKP3 acts as a scaffold protein within the complex, the complex is required for CDH1 localization to mature desmosome cell junctions (By similarity). Interacts with the TRPV4 and CTNNB1 complex (PubMed:11348595, PubMed:20413591). Interacts with CTNND1 (By similarity). The stable association of CTNNA1 is controversial as CTNNA1 was shown not to bind to F-actin when assembled in the complex (PubMed:16325582). Alternatively, the CTNNA1-containing complex may be linked to F-actin by other proteins such as LIMA1 (PubMed:18093941). Interaction with PSEN1, cleaves CDH1 resulting in the disassociation of cadherin-based adherens junctions (CAJs) (By similarity). Interacts with AJAP1 and DLGAP5 (By similarity). Interacts with TBC1D2 (By similarity). Interacts with LIMA1 (By similarity). Interacts with CAV1 (By similarity). Interacts with PIP5K1C (By similarity). Interacts with RAB8B (By similarity). Interacts with DDR1; this stabilizes CDH1 at the cell surface and inhibits its internalization (By similarity). Interacts with RAPGEF2 (By similarity). Interacts with KLRG1 (By similarity). Forms a ternary complex composed of ADAM10, CADH1 and EPHA4; within the complex, CADH1 is cleaved by ADAM10 which disrupts adherens junctions (PubMed:30639848). Interacts with SPEF1 (By similarity). Interacts with CTNNB1 and PKP2 (By similarity). Interacts with AMOTL2; the interaction may facilitate binding of radial actin fibers to cell junction complexes (By similarity). Interacts with DSG3; the interaction is required for CDH1 localization to developing adherens junctions (By similarity).</text>
</comment>
<comment type="interaction">
    <interactant intactId="EBI-984420">
        <id>P09803</id>
    </interactant>
    <interactant intactId="EBI-984420">
        <id>P09803</id>
        <label>Cdh1</label>
    </interactant>
    <organismsDiffer>false</organismsDiffer>
    <experiments>12</experiments>
</comment>
<comment type="interaction">
    <interactant intactId="EBI-984420">
        <id>P09803</id>
    </interactant>
    <interactant intactId="EBI-7840438">
        <id>P61809</id>
        <label>Cdk5r1</label>
    </interactant>
    <organismsDiffer>false</organismsDiffer>
    <experiments>2</experiments>
</comment>
<comment type="interaction">
    <interactant intactId="EBI-984420">
        <id>P09803</id>
    </interactant>
    <interactant intactId="EBI-397872">
        <id>Q02248</id>
        <label>Ctnnb1</label>
    </interactant>
    <organismsDiffer>false</organismsDiffer>
    <experiments>17</experiments>
</comment>
<comment type="interaction">
    <interactant intactId="EBI-984420">
        <id>P09803</id>
    </interactant>
    <interactant intactId="EBI-702059">
        <id>O60716-29</id>
        <label>CTNND1</label>
    </interactant>
    <organismsDiffer>true</organismsDiffer>
    <experiments>3</experiments>
</comment>
<comment type="interaction">
    <interactant intactId="EBI-984420">
        <id>P09803</id>
    </interactant>
    <interactant intactId="EBI-16109901">
        <id>A5HZZ4</id>
        <label>ha70</label>
    </interactant>
    <organismsDiffer>true</organismsDiffer>
    <experiments>6</experiments>
</comment>
<comment type="interaction">
    <interactant intactId="EBI-984420">
        <id>P09803</id>
    </interactant>
    <interactant intactId="EBI-2257317">
        <id>P28827</id>
        <label>PTPRM</label>
    </interactant>
    <organismsDiffer>true</organismsDiffer>
    <experiments>3</experiments>
</comment>
<comment type="interaction">
    <interactant intactId="EBI-984420">
        <id>P09803</id>
    </interactant>
    <interactant intactId="EBI-456291">
        <id>Q13309</id>
        <label>SKP2</label>
    </interactant>
    <organismsDiffer>true</organismsDiffer>
    <experiments>2</experiments>
</comment>
<comment type="subcellular location">
    <subcellularLocation>
        <location evidence="11 18 21">Cell junction</location>
        <location evidence="11 18 21">Adherens junction</location>
    </subcellularLocation>
    <subcellularLocation>
        <location evidence="19">Cell membrane</location>
        <topology>Single-pass type I membrane protein</topology>
    </subcellularLocation>
    <subcellularLocation>
        <location evidence="3">Endosome</location>
    </subcellularLocation>
    <subcellularLocation>
        <location evidence="3">Golgi apparatus</location>
        <location evidence="3">trans-Golgi network</location>
    </subcellularLocation>
    <subcellularLocation>
        <location evidence="18 19">Cytoplasm</location>
    </subcellularLocation>
    <subcellularLocation>
        <location evidence="3">Cell junction</location>
        <location evidence="3">Desmosome</location>
    </subcellularLocation>
    <text evidence="1 3 18">Colocalizes with DLGAP5 at sites of cell-cell contact in intestinal epithelial cells. Anchored to actin microfilaments through association with alpha-, beta- and gamma-catenin. Sequential proteolysis induced by apoptosis or calcium influx, results in translocation from sites of cell-cell contact to the cytoplasm. Colocalizes with RAB11A endosomes during its transport from the Golgi apparatus to the plasma membrane (By similarity). Recruited to desmosomes at the initial assembly phase and also accumulates progressively at mature desmosome cell-cell junctions (By similarity). Localizes to cell-cell contacts as keratinocyte differentiation progresses (PubMed:27375112).</text>
</comment>
<comment type="tissue specificity">
    <text evidence="14 18 19 21">Expressed in inner and outer pillar cells of the organ of Corti (at protein level) (PubMed:30639848). Expressed in granuloma macrophages (at protein level) (PubMed:27760340). Expressed in the epidermal keratinocytes of the skin from birth (at protein level) (PubMed:18079750, PubMed:27375112). Expressed in non-neural epithelial tissues.</text>
</comment>
<comment type="developmental stage">
    <text evidence="23">In the testis, expression is highest in fetal gonad, then decreases 5-fold in newborn. Detectable in 7-day-old but not in 21-day-old or adult.</text>
</comment>
<comment type="domain">
    <text evidence="3">Three calcium ions are usually bound at the interface of each cadherin domain and strengthen the connections, imparting a strong curvature to the full-length ectodomain.</text>
</comment>
<comment type="PTM">
    <text evidence="3 21">During apoptosis or with calcium influx, cleaved by a membrane-bound metalloproteinase (ADAM10), PS1/gamma-secretase and caspase-3 (By similarity). Processing by the metalloproteinase, induced by calcium influx, causes disruption of cell-cell adhesion and the subsequent release of beta-catenin into the cytoplasm (By similarity). The residual membrane-tethered cleavage product is rapidly degraded via an intracellular proteolytic pathway (By similarity). Cleavage by caspase-3 releases the cytoplasmic tail resulting in disintegration of the actin microfilament system (By similarity). The gamma-secretase-mediated cleavage promotes disassembly of adherens junctions (By similarity). During development of the cochlear organ of Corti, cleavage by ADAM10 at adherens junctions promotes pillar cell separation (PubMed:30639848).</text>
</comment>
<comment type="PTM">
    <text evidence="20">O-glycosylated. O-manosylated by TMTC1, TMTC2, TMTC3 or TMTC4. Ser-287 and Thr-511 are O-manosylated by TMTC2 or TMTC4 but not TMTC1 or TMTC3.</text>
</comment>
<comment type="PTM">
    <text evidence="1 3">N-glycosylation at Asn-639 is essential for expression, folding and trafficking. Addition of bisecting N-acetylglucosamine by MGAT3 modulates its cell membrane location (By similarity).</text>
</comment>
<comment type="PTM">
    <text evidence="1">Ubiquitinated by a SCF complex containing SKP2, which requires prior phosphorylation by CK1/CSNK1A1. Ubiquitinated by CBLL1/HAKAI, requires prior phosphorylation at Tyr-756 (By similarity).</text>
</comment>
<protein>
    <recommendedName>
        <fullName>Cadherin-1</fullName>
    </recommendedName>
    <alternativeName>
        <fullName>ARC-1</fullName>
    </alternativeName>
    <alternativeName>
        <fullName>Epithelial cadherin</fullName>
        <shortName>E-cadherin</shortName>
    </alternativeName>
    <alternativeName>
        <fullName>Uvomorulin</fullName>
    </alternativeName>
    <cdAntigenName>CD324</cdAntigenName>
    <component>
        <recommendedName>
            <fullName>E-Cad/CTF1</fullName>
        </recommendedName>
    </component>
    <component>
        <recommendedName>
            <fullName>E-Cad/CTF2</fullName>
        </recommendedName>
    </component>
    <component>
        <recommendedName>
            <fullName>E-Cad/CTF3</fullName>
        </recommendedName>
    </component>
</protein>